<evidence type="ECO:0000250" key="1"/>
<evidence type="ECO:0000255" key="2">
    <source>
        <dbReference type="HAMAP-Rule" id="MF_01395"/>
    </source>
</evidence>
<evidence type="ECO:0000255" key="3">
    <source>
        <dbReference type="PROSITE-ProRule" id="PRU01136"/>
    </source>
</evidence>
<dbReference type="EC" id="2.1.3.15" evidence="2"/>
<dbReference type="EMBL" id="AP002983">
    <property type="protein sequence ID" value="BAB33205.1"/>
    <property type="molecule type" value="Genomic_DNA"/>
</dbReference>
<dbReference type="RefSeq" id="NP_084807.1">
    <property type="nucleotide sequence ID" value="NC_002694.1"/>
</dbReference>
<dbReference type="SMR" id="Q9BBS1"/>
<dbReference type="GeneID" id="802909"/>
<dbReference type="UniPathway" id="UPA00655">
    <property type="reaction ID" value="UER00711"/>
</dbReference>
<dbReference type="GO" id="GO:0009317">
    <property type="term" value="C:acetyl-CoA carboxylase complex"/>
    <property type="evidence" value="ECO:0007669"/>
    <property type="project" value="InterPro"/>
</dbReference>
<dbReference type="GO" id="GO:0009570">
    <property type="term" value="C:chloroplast stroma"/>
    <property type="evidence" value="ECO:0007669"/>
    <property type="project" value="UniProtKB-SubCell"/>
</dbReference>
<dbReference type="GO" id="GO:0003989">
    <property type="term" value="F:acetyl-CoA carboxylase activity"/>
    <property type="evidence" value="ECO:0007669"/>
    <property type="project" value="InterPro"/>
</dbReference>
<dbReference type="GO" id="GO:0005524">
    <property type="term" value="F:ATP binding"/>
    <property type="evidence" value="ECO:0007669"/>
    <property type="project" value="UniProtKB-KW"/>
</dbReference>
<dbReference type="GO" id="GO:0016743">
    <property type="term" value="F:carboxyl- or carbamoyltransferase activity"/>
    <property type="evidence" value="ECO:0007669"/>
    <property type="project" value="UniProtKB-UniRule"/>
</dbReference>
<dbReference type="GO" id="GO:0008270">
    <property type="term" value="F:zinc ion binding"/>
    <property type="evidence" value="ECO:0007669"/>
    <property type="project" value="UniProtKB-UniRule"/>
</dbReference>
<dbReference type="GO" id="GO:0006633">
    <property type="term" value="P:fatty acid biosynthetic process"/>
    <property type="evidence" value="ECO:0007669"/>
    <property type="project" value="UniProtKB-KW"/>
</dbReference>
<dbReference type="GO" id="GO:2001295">
    <property type="term" value="P:malonyl-CoA biosynthetic process"/>
    <property type="evidence" value="ECO:0007669"/>
    <property type="project" value="UniProtKB-UniRule"/>
</dbReference>
<dbReference type="Gene3D" id="3.90.226.10">
    <property type="entry name" value="2-enoyl-CoA Hydratase, Chain A, domain 1"/>
    <property type="match status" value="1"/>
</dbReference>
<dbReference type="HAMAP" id="MF_01395">
    <property type="entry name" value="AcetylCoA_CT_beta"/>
    <property type="match status" value="1"/>
</dbReference>
<dbReference type="InterPro" id="IPR034733">
    <property type="entry name" value="AcCoA_carboxyl_beta"/>
</dbReference>
<dbReference type="InterPro" id="IPR000438">
    <property type="entry name" value="Acetyl_CoA_COase_Trfase_b_su"/>
</dbReference>
<dbReference type="InterPro" id="IPR029045">
    <property type="entry name" value="ClpP/crotonase-like_dom_sf"/>
</dbReference>
<dbReference type="InterPro" id="IPR011762">
    <property type="entry name" value="COA_CT_N"/>
</dbReference>
<dbReference type="NCBIfam" id="TIGR00515">
    <property type="entry name" value="accD"/>
    <property type="match status" value="1"/>
</dbReference>
<dbReference type="PANTHER" id="PTHR42995">
    <property type="entry name" value="ACETYL-COENZYME A CARBOXYLASE CARBOXYL TRANSFERASE SUBUNIT BETA, CHLOROPLASTIC"/>
    <property type="match status" value="1"/>
</dbReference>
<dbReference type="PANTHER" id="PTHR42995:SF5">
    <property type="entry name" value="ACETYL-COENZYME A CARBOXYLASE CARBOXYL TRANSFERASE SUBUNIT BETA, CHLOROPLASTIC"/>
    <property type="match status" value="1"/>
</dbReference>
<dbReference type="Pfam" id="PF01039">
    <property type="entry name" value="Carboxyl_trans"/>
    <property type="match status" value="1"/>
</dbReference>
<dbReference type="PRINTS" id="PR01070">
    <property type="entry name" value="ACCCTRFRASEB"/>
</dbReference>
<dbReference type="SUPFAM" id="SSF52096">
    <property type="entry name" value="ClpP/crotonase"/>
    <property type="match status" value="1"/>
</dbReference>
<dbReference type="PROSITE" id="PS50980">
    <property type="entry name" value="COA_CT_NTER"/>
    <property type="match status" value="1"/>
</dbReference>
<proteinExistence type="inferred from homology"/>
<name>ACCD_LOTJA</name>
<keyword id="KW-0067">ATP-binding</keyword>
<keyword id="KW-0150">Chloroplast</keyword>
<keyword id="KW-0275">Fatty acid biosynthesis</keyword>
<keyword id="KW-0276">Fatty acid metabolism</keyword>
<keyword id="KW-0444">Lipid biosynthesis</keyword>
<keyword id="KW-0443">Lipid metabolism</keyword>
<keyword id="KW-0479">Metal-binding</keyword>
<keyword id="KW-0547">Nucleotide-binding</keyword>
<keyword id="KW-0934">Plastid</keyword>
<keyword id="KW-0808">Transferase</keyword>
<keyword id="KW-0862">Zinc</keyword>
<keyword id="KW-0863">Zinc-finger</keyword>
<organism>
    <name type="scientific">Lotus japonicus</name>
    <name type="common">Lotus corniculatus var. japonicus</name>
    <dbReference type="NCBI Taxonomy" id="34305"/>
    <lineage>
        <taxon>Eukaryota</taxon>
        <taxon>Viridiplantae</taxon>
        <taxon>Streptophyta</taxon>
        <taxon>Embryophyta</taxon>
        <taxon>Tracheophyta</taxon>
        <taxon>Spermatophyta</taxon>
        <taxon>Magnoliopsida</taxon>
        <taxon>eudicotyledons</taxon>
        <taxon>Gunneridae</taxon>
        <taxon>Pentapetalae</taxon>
        <taxon>rosids</taxon>
        <taxon>fabids</taxon>
        <taxon>Fabales</taxon>
        <taxon>Fabaceae</taxon>
        <taxon>Papilionoideae</taxon>
        <taxon>50 kb inversion clade</taxon>
        <taxon>NPAAA clade</taxon>
        <taxon>Hologalegina</taxon>
        <taxon>robinioid clade</taxon>
        <taxon>Loteae</taxon>
        <taxon>Lotus</taxon>
    </lineage>
</organism>
<comment type="function">
    <text evidence="2">Component of the acetyl coenzyme A carboxylase (ACC) complex. Biotin carboxylase (BC) catalyzes the carboxylation of biotin on its carrier protein (BCCP) and then the CO(2) group is transferred by the transcarboxylase to acetyl-CoA to form malonyl-CoA.</text>
</comment>
<comment type="catalytic activity">
    <reaction evidence="2">
        <text>N(6)-carboxybiotinyl-L-lysyl-[protein] + acetyl-CoA = N(6)-biotinyl-L-lysyl-[protein] + malonyl-CoA</text>
        <dbReference type="Rhea" id="RHEA:54728"/>
        <dbReference type="Rhea" id="RHEA-COMP:10505"/>
        <dbReference type="Rhea" id="RHEA-COMP:10506"/>
        <dbReference type="ChEBI" id="CHEBI:57288"/>
        <dbReference type="ChEBI" id="CHEBI:57384"/>
        <dbReference type="ChEBI" id="CHEBI:83144"/>
        <dbReference type="ChEBI" id="CHEBI:83145"/>
        <dbReference type="EC" id="2.1.3.15"/>
    </reaction>
</comment>
<comment type="cofactor">
    <cofactor evidence="2">
        <name>Zn(2+)</name>
        <dbReference type="ChEBI" id="CHEBI:29105"/>
    </cofactor>
    <text evidence="2">Binds 1 zinc ion per subunit.</text>
</comment>
<comment type="pathway">
    <text evidence="2">Lipid metabolism; malonyl-CoA biosynthesis; malonyl-CoA from acetyl-CoA: step 1/1.</text>
</comment>
<comment type="subunit">
    <text evidence="1">Acetyl-CoA carboxylase is a heterohexamer composed of biotin carboxyl carrier protein, biotin carboxylase and 2 subunits each of ACCase subunit alpha and ACCase plastid-coded subunit beta (accD).</text>
</comment>
<comment type="subcellular location">
    <subcellularLocation>
        <location evidence="2">Plastid</location>
        <location evidence="2">Chloroplast stroma</location>
    </subcellularLocation>
</comment>
<comment type="similarity">
    <text evidence="2">Belongs to the AccD/PCCB family.</text>
</comment>
<sequence length="501" mass="57038">MEKWWLNSMLRNRELAYKCGLSKSTDRFGPIENTSVSEDPPILTDMDKNIHSWNDIENCSYNNVDYLVGVENIRNFLSNKSFLVRDSKRNSYSIYFAIENQILEIDNDHLFLSELESFFSRYTNSIYLNNSSKGDGDHYMYDTESSWNNNINSFIENYIRSQICIDNYILGDGDKYNDSYFYSYICSTIRKKSSERERTSIITSTNNLNDSDFTKIEGSNDLDETQKYKHLWIECENCYGLNYKKILKSKMNICEHCGYHLKMSSSDRIELSIDPGTWNPMDEDMISVDPIEFHSEEEPYKDRIDSYQKTTGLTEAVQTGTGHLNGIPVAIGIMDFEFMGGSMGSVVGEKITRLVEYATNQLLPLIVVCASGGARMQEGSLSLMQMAKISSALYDYQLNKKLFYVSILTSPTTGGVTASFGMLGDIIIAEPNAYIAFAGKRVIEQTLNKAVPEGSQAAEYLFHKGLFDSIVPRNPLKGILSELFQLHAFFPLIQNEKESRS</sequence>
<accession>Q9BBS1</accession>
<geneLocation type="chloroplast"/>
<feature type="chain" id="PRO_0000199785" description="Acetyl-coenzyme A carboxylase carboxyl transferase subunit beta, chloroplastic">
    <location>
        <begin position="1"/>
        <end position="501"/>
    </location>
</feature>
<feature type="domain" description="CoA carboxyltransferase N-terminal" evidence="3">
    <location>
        <begin position="231"/>
        <end position="501"/>
    </location>
</feature>
<feature type="zinc finger region" description="C4-type" evidence="2">
    <location>
        <begin position="235"/>
        <end position="257"/>
    </location>
</feature>
<feature type="binding site" evidence="2">
    <location>
        <position position="235"/>
    </location>
    <ligand>
        <name>Zn(2+)</name>
        <dbReference type="ChEBI" id="CHEBI:29105"/>
    </ligand>
</feature>
<feature type="binding site" evidence="2">
    <location>
        <position position="238"/>
    </location>
    <ligand>
        <name>Zn(2+)</name>
        <dbReference type="ChEBI" id="CHEBI:29105"/>
    </ligand>
</feature>
<feature type="binding site" evidence="2">
    <location>
        <position position="254"/>
    </location>
    <ligand>
        <name>Zn(2+)</name>
        <dbReference type="ChEBI" id="CHEBI:29105"/>
    </ligand>
</feature>
<feature type="binding site" evidence="2">
    <location>
        <position position="257"/>
    </location>
    <ligand>
        <name>Zn(2+)</name>
        <dbReference type="ChEBI" id="CHEBI:29105"/>
    </ligand>
</feature>
<protein>
    <recommendedName>
        <fullName evidence="2">Acetyl-coenzyme A carboxylase carboxyl transferase subunit beta, chloroplastic</fullName>
        <shortName evidence="2">ACCase subunit beta</shortName>
        <shortName evidence="2">Acetyl-CoA carboxylase carboxyltransferase subunit beta</shortName>
        <ecNumber evidence="2">2.1.3.15</ecNumber>
    </recommendedName>
</protein>
<gene>
    <name evidence="2" type="primary">accD</name>
</gene>
<reference key="1">
    <citation type="journal article" date="2000" name="DNA Res.">
        <title>Complete structure of the chloroplast genome of a legume, Lotus japonicus.</title>
        <authorList>
            <person name="Kato T."/>
            <person name="Kaneko T."/>
            <person name="Sato S."/>
            <person name="Nakamura Y."/>
            <person name="Tabata S."/>
        </authorList>
    </citation>
    <scope>NUCLEOTIDE SEQUENCE [LARGE SCALE GENOMIC DNA]</scope>
    <source>
        <strain>cv. Miyakojima MG-20</strain>
    </source>
</reference>